<protein>
    <recommendedName>
        <fullName evidence="1">tRNA pseudouridine synthase A</fullName>
        <ecNumber evidence="1">5.4.99.12</ecNumber>
    </recommendedName>
    <alternativeName>
        <fullName evidence="1">tRNA pseudouridine(38-40) synthase</fullName>
    </alternativeName>
    <alternativeName>
        <fullName evidence="1">tRNA pseudouridylate synthase I</fullName>
    </alternativeName>
    <alternativeName>
        <fullName evidence="1">tRNA-uridine isomerase I</fullName>
    </alternativeName>
</protein>
<dbReference type="EC" id="5.4.99.12" evidence="1"/>
<dbReference type="EMBL" id="CP000525">
    <property type="protein sequence ID" value="ABM48921.1"/>
    <property type="molecule type" value="Genomic_DNA"/>
</dbReference>
<dbReference type="RefSeq" id="WP_004203245.1">
    <property type="nucleotide sequence ID" value="NC_008784.1"/>
</dbReference>
<dbReference type="SMR" id="A1UZ38"/>
<dbReference type="GeneID" id="93063899"/>
<dbReference type="KEGG" id="bmv:BMASAVP1_1647"/>
<dbReference type="HOGENOM" id="CLU_014673_0_2_4"/>
<dbReference type="GO" id="GO:0003723">
    <property type="term" value="F:RNA binding"/>
    <property type="evidence" value="ECO:0007669"/>
    <property type="project" value="InterPro"/>
</dbReference>
<dbReference type="GO" id="GO:0160147">
    <property type="term" value="F:tRNA pseudouridine(38-40) synthase activity"/>
    <property type="evidence" value="ECO:0007669"/>
    <property type="project" value="UniProtKB-EC"/>
</dbReference>
<dbReference type="GO" id="GO:0031119">
    <property type="term" value="P:tRNA pseudouridine synthesis"/>
    <property type="evidence" value="ECO:0007669"/>
    <property type="project" value="UniProtKB-UniRule"/>
</dbReference>
<dbReference type="CDD" id="cd02570">
    <property type="entry name" value="PseudoU_synth_EcTruA"/>
    <property type="match status" value="1"/>
</dbReference>
<dbReference type="FunFam" id="3.30.70.580:FF:000001">
    <property type="entry name" value="tRNA pseudouridine synthase A"/>
    <property type="match status" value="1"/>
</dbReference>
<dbReference type="Gene3D" id="3.30.70.660">
    <property type="entry name" value="Pseudouridine synthase I, catalytic domain, C-terminal subdomain"/>
    <property type="match status" value="1"/>
</dbReference>
<dbReference type="Gene3D" id="3.30.70.580">
    <property type="entry name" value="Pseudouridine synthase I, catalytic domain, N-terminal subdomain"/>
    <property type="match status" value="1"/>
</dbReference>
<dbReference type="HAMAP" id="MF_00171">
    <property type="entry name" value="TruA"/>
    <property type="match status" value="1"/>
</dbReference>
<dbReference type="InterPro" id="IPR020103">
    <property type="entry name" value="PsdUridine_synth_cat_dom_sf"/>
</dbReference>
<dbReference type="InterPro" id="IPR001406">
    <property type="entry name" value="PsdUridine_synth_TruA"/>
</dbReference>
<dbReference type="InterPro" id="IPR020097">
    <property type="entry name" value="PsdUridine_synth_TruA_a/b_dom"/>
</dbReference>
<dbReference type="InterPro" id="IPR020095">
    <property type="entry name" value="PsdUridine_synth_TruA_C"/>
</dbReference>
<dbReference type="InterPro" id="IPR020094">
    <property type="entry name" value="TruA/RsuA/RluB/E/F_N"/>
</dbReference>
<dbReference type="NCBIfam" id="TIGR00071">
    <property type="entry name" value="hisT_truA"/>
    <property type="match status" value="1"/>
</dbReference>
<dbReference type="PANTHER" id="PTHR11142">
    <property type="entry name" value="PSEUDOURIDYLATE SYNTHASE"/>
    <property type="match status" value="1"/>
</dbReference>
<dbReference type="PANTHER" id="PTHR11142:SF0">
    <property type="entry name" value="TRNA PSEUDOURIDINE SYNTHASE-LIKE 1"/>
    <property type="match status" value="1"/>
</dbReference>
<dbReference type="Pfam" id="PF01416">
    <property type="entry name" value="PseudoU_synth_1"/>
    <property type="match status" value="2"/>
</dbReference>
<dbReference type="PIRSF" id="PIRSF001430">
    <property type="entry name" value="tRNA_psdUrid_synth"/>
    <property type="match status" value="1"/>
</dbReference>
<dbReference type="SUPFAM" id="SSF55120">
    <property type="entry name" value="Pseudouridine synthase"/>
    <property type="match status" value="1"/>
</dbReference>
<proteinExistence type="inferred from homology"/>
<evidence type="ECO:0000255" key="1">
    <source>
        <dbReference type="HAMAP-Rule" id="MF_00171"/>
    </source>
</evidence>
<comment type="function">
    <text evidence="1">Formation of pseudouridine at positions 38, 39 and 40 in the anticodon stem and loop of transfer RNAs.</text>
</comment>
<comment type="catalytic activity">
    <reaction evidence="1">
        <text>uridine(38/39/40) in tRNA = pseudouridine(38/39/40) in tRNA</text>
        <dbReference type="Rhea" id="RHEA:22376"/>
        <dbReference type="Rhea" id="RHEA-COMP:10085"/>
        <dbReference type="Rhea" id="RHEA-COMP:10087"/>
        <dbReference type="ChEBI" id="CHEBI:65314"/>
        <dbReference type="ChEBI" id="CHEBI:65315"/>
        <dbReference type="EC" id="5.4.99.12"/>
    </reaction>
</comment>
<comment type="subunit">
    <text evidence="1">Homodimer.</text>
</comment>
<comment type="similarity">
    <text evidence="1">Belongs to the tRNA pseudouridine synthase TruA family.</text>
</comment>
<keyword id="KW-0413">Isomerase</keyword>
<keyword id="KW-0819">tRNA processing</keyword>
<name>TRUA_BURMS</name>
<accession>A1UZ38</accession>
<sequence>MRIALGIQYDGAAFCGWQSQPHGKTVQDALERSLAEFAQTSLHTTVAGRTDTGVHGLGQVVHFDTDLDRADFSWVRGTNAFLPPTVAVQWAKPMPDTFHARFAAFERTYYYALYVHPVRSPMLAGRAGWVHTPLDVDAMREAAAHLVGEHDFSAFRSSECQAKSPVKHLYQIGIRPDGDFIHFRFRANAFLHHMVRNLMGCLVAVGRGRYPSSWLAEVLESRDRDCAAPTFMPEGLYLAHVGYPAEFAVPPAQLGSVPWSSVWADLDGRT</sequence>
<feature type="chain" id="PRO_1000017055" description="tRNA pseudouridine synthase A">
    <location>
        <begin position="1"/>
        <end position="270"/>
    </location>
</feature>
<feature type="active site" description="Nucleophile" evidence="1">
    <location>
        <position position="51"/>
    </location>
</feature>
<feature type="binding site" evidence="1">
    <location>
        <position position="109"/>
    </location>
    <ligand>
        <name>substrate</name>
    </ligand>
</feature>
<gene>
    <name evidence="1" type="primary">truA</name>
    <name type="ordered locus">BMASAVP1_1647</name>
</gene>
<reference key="1">
    <citation type="journal article" date="2010" name="Genome Biol. Evol.">
        <title>Continuing evolution of Burkholderia mallei through genome reduction and large-scale rearrangements.</title>
        <authorList>
            <person name="Losada L."/>
            <person name="Ronning C.M."/>
            <person name="DeShazer D."/>
            <person name="Woods D."/>
            <person name="Fedorova N."/>
            <person name="Kim H.S."/>
            <person name="Shabalina S.A."/>
            <person name="Pearson T.R."/>
            <person name="Brinkac L."/>
            <person name="Tan P."/>
            <person name="Nandi T."/>
            <person name="Crabtree J."/>
            <person name="Badger J."/>
            <person name="Beckstrom-Sternberg S."/>
            <person name="Saqib M."/>
            <person name="Schutzer S.E."/>
            <person name="Keim P."/>
            <person name="Nierman W.C."/>
        </authorList>
    </citation>
    <scope>NUCLEOTIDE SEQUENCE [LARGE SCALE GENOMIC DNA]</scope>
    <source>
        <strain>SAVP1</strain>
    </source>
</reference>
<organism>
    <name type="scientific">Burkholderia mallei (strain SAVP1)</name>
    <dbReference type="NCBI Taxonomy" id="320388"/>
    <lineage>
        <taxon>Bacteria</taxon>
        <taxon>Pseudomonadati</taxon>
        <taxon>Pseudomonadota</taxon>
        <taxon>Betaproteobacteria</taxon>
        <taxon>Burkholderiales</taxon>
        <taxon>Burkholderiaceae</taxon>
        <taxon>Burkholderia</taxon>
        <taxon>pseudomallei group</taxon>
    </lineage>
</organism>